<protein>
    <recommendedName>
        <fullName evidence="1">Maltoporin</fullName>
    </recommendedName>
    <alternativeName>
        <fullName evidence="1">Maltose-inducible porin</fullName>
    </alternativeName>
</protein>
<reference key="1">
    <citation type="journal article" date="2005" name="Nucleic Acids Res.">
        <title>Genomic blueprint of Hahella chejuensis, a marine microbe producing an algicidal agent.</title>
        <authorList>
            <person name="Jeong H."/>
            <person name="Yim J.H."/>
            <person name="Lee C."/>
            <person name="Choi S.-H."/>
            <person name="Park Y.K."/>
            <person name="Yoon S.H."/>
            <person name="Hur C.-G."/>
            <person name="Kang H.-Y."/>
            <person name="Kim D."/>
            <person name="Lee H.H."/>
            <person name="Park K.H."/>
            <person name="Park S.-H."/>
            <person name="Park H.-S."/>
            <person name="Lee H.K."/>
            <person name="Oh T.K."/>
            <person name="Kim J.F."/>
        </authorList>
    </citation>
    <scope>NUCLEOTIDE SEQUENCE [LARGE SCALE GENOMIC DNA]</scope>
    <source>
        <strain>KCTC 2396</strain>
    </source>
</reference>
<feature type="signal peptide" evidence="1">
    <location>
        <begin position="1"/>
        <end position="30"/>
    </location>
</feature>
<feature type="chain" id="PRO_0000290220" description="Maltoporin">
    <location>
        <begin position="31"/>
        <end position="398"/>
    </location>
</feature>
<feature type="site" description="Greasy slide, important in sugar transport" evidence="1">
    <location>
        <position position="36"/>
    </location>
</feature>
<feature type="site" description="Greasy slide, important in sugar transport" evidence="1">
    <location>
        <position position="67"/>
    </location>
</feature>
<feature type="site" description="Greasy slide, important in sugar transport" evidence="1">
    <location>
        <position position="238"/>
    </location>
</feature>
<feature type="site" description="Greasy slide, important in sugar transport" evidence="1">
    <location>
        <position position="360"/>
    </location>
</feature>
<feature type="site" description="Greasy slide, important in sugar transport" evidence="1">
    <location>
        <position position="397"/>
    </location>
</feature>
<dbReference type="EMBL" id="CP000155">
    <property type="protein sequence ID" value="ABC27257.1"/>
    <property type="molecule type" value="Genomic_DNA"/>
</dbReference>
<dbReference type="RefSeq" id="WP_011394334.1">
    <property type="nucleotide sequence ID" value="NC_007645.1"/>
</dbReference>
<dbReference type="SMR" id="Q2SQ17"/>
<dbReference type="STRING" id="349521.HCH_00345"/>
<dbReference type="KEGG" id="hch:HCH_00345"/>
<dbReference type="eggNOG" id="COG4580">
    <property type="taxonomic scope" value="Bacteria"/>
</dbReference>
<dbReference type="HOGENOM" id="CLU_032473_4_1_6"/>
<dbReference type="OrthoDB" id="106611at2"/>
<dbReference type="Proteomes" id="UP000000238">
    <property type="component" value="Chromosome"/>
</dbReference>
<dbReference type="GO" id="GO:0009279">
    <property type="term" value="C:cell outer membrane"/>
    <property type="evidence" value="ECO:0007669"/>
    <property type="project" value="UniProtKB-SubCell"/>
</dbReference>
<dbReference type="GO" id="GO:0046930">
    <property type="term" value="C:pore complex"/>
    <property type="evidence" value="ECO:0007669"/>
    <property type="project" value="UniProtKB-KW"/>
</dbReference>
<dbReference type="GO" id="GO:0042958">
    <property type="term" value="F:maltodextrin transmembrane transporter activity"/>
    <property type="evidence" value="ECO:0007669"/>
    <property type="project" value="InterPro"/>
</dbReference>
<dbReference type="GO" id="GO:0015481">
    <property type="term" value="F:maltose transporting porin activity"/>
    <property type="evidence" value="ECO:0007669"/>
    <property type="project" value="InterPro"/>
</dbReference>
<dbReference type="GO" id="GO:0006811">
    <property type="term" value="P:monoatomic ion transport"/>
    <property type="evidence" value="ECO:0007669"/>
    <property type="project" value="UniProtKB-KW"/>
</dbReference>
<dbReference type="CDD" id="cd01346">
    <property type="entry name" value="Maltoporin-like"/>
    <property type="match status" value="1"/>
</dbReference>
<dbReference type="Gene3D" id="2.40.170.10">
    <property type="entry name" value="Porin, LamB type"/>
    <property type="match status" value="1"/>
</dbReference>
<dbReference type="HAMAP" id="MF_01301">
    <property type="entry name" value="LamB"/>
    <property type="match status" value="1"/>
</dbReference>
<dbReference type="InterPro" id="IPR050286">
    <property type="entry name" value="G_neg_Bact_CarbUptk_Porin"/>
</dbReference>
<dbReference type="InterPro" id="IPR023738">
    <property type="entry name" value="Maltoporin"/>
</dbReference>
<dbReference type="InterPro" id="IPR003192">
    <property type="entry name" value="Porin_LamB"/>
</dbReference>
<dbReference type="InterPro" id="IPR036998">
    <property type="entry name" value="Porin_LamB_sf"/>
</dbReference>
<dbReference type="NCBIfam" id="NF006860">
    <property type="entry name" value="PRK09360.1"/>
    <property type="match status" value="1"/>
</dbReference>
<dbReference type="PANTHER" id="PTHR38762">
    <property type="entry name" value="CRYPTIC OUTER MEMBRANE PORIN BGLH-RELATED"/>
    <property type="match status" value="1"/>
</dbReference>
<dbReference type="PANTHER" id="PTHR38762:SF1">
    <property type="entry name" value="CRYPTIC OUTER MEMBRANE PORIN BGLH-RELATED"/>
    <property type="match status" value="1"/>
</dbReference>
<dbReference type="Pfam" id="PF02264">
    <property type="entry name" value="LamB"/>
    <property type="match status" value="1"/>
</dbReference>
<dbReference type="SUPFAM" id="SSF56935">
    <property type="entry name" value="Porins"/>
    <property type="match status" value="1"/>
</dbReference>
<organism>
    <name type="scientific">Hahella chejuensis (strain KCTC 2396)</name>
    <dbReference type="NCBI Taxonomy" id="349521"/>
    <lineage>
        <taxon>Bacteria</taxon>
        <taxon>Pseudomonadati</taxon>
        <taxon>Pseudomonadota</taxon>
        <taxon>Gammaproteobacteria</taxon>
        <taxon>Oceanospirillales</taxon>
        <taxon>Hahellaceae</taxon>
        <taxon>Hahella</taxon>
    </lineage>
</organism>
<gene>
    <name evidence="1" type="primary">lamB</name>
    <name type="ordered locus">HCH_00345</name>
</gene>
<comment type="function">
    <text evidence="1">Involved in the transport of maltose and maltodextrins.</text>
</comment>
<comment type="catalytic activity">
    <reaction evidence="1">
        <text>beta-maltose(in) = beta-maltose(out)</text>
        <dbReference type="Rhea" id="RHEA:29731"/>
        <dbReference type="ChEBI" id="CHEBI:18147"/>
    </reaction>
</comment>
<comment type="subunit">
    <text evidence="1">Homotrimer formed of three 18-stranded antiparallel beta-barrels, containing three independent channels.</text>
</comment>
<comment type="subcellular location">
    <subcellularLocation>
        <location evidence="1">Cell outer membrane</location>
        <topology evidence="1">Multi-pass membrane protein</topology>
    </subcellularLocation>
</comment>
<comment type="induction">
    <text evidence="1">By maltose.</text>
</comment>
<comment type="similarity">
    <text evidence="1">Belongs to the porin LamB (TC 1.B.3) family.</text>
</comment>
<sequence>MTDKNNKRLFKVAPLATAIAASLFTVNASAVEWHGYARSGIGMSDNGDQQCINKQAVGRLGNECETYAELDLQQELFNRDGKTFKVETMLSYKSNQDGDYEALNSEDDEIALRQMNVQAKGVLGFAPEATLWAGKRYYQRHDIHHLDLFYWDVSGPGAGIEGIDAGAGKFSAAWTRGYGNINILDFRYSGIQVGASSLEVGLDLAKPRLTDAQKDAGAADDLSTLFTAELSTPIMDGFNKIVFQYGTEGYASPMRNFGGGQWNGTLDKGGKGFRLIDWGVVKPSANIELSYAAMYGVFEDDDMNDDSSFYSISARPAYKWSDYMRTYLEVGYFAADDDGVDSQLDKITIAQAWSAGPSFWARPEIRVFASYINDGEGTPFEGGEDSVLNFGVQMEAWW</sequence>
<evidence type="ECO:0000255" key="1">
    <source>
        <dbReference type="HAMAP-Rule" id="MF_01301"/>
    </source>
</evidence>
<accession>Q2SQ17</accession>
<proteinExistence type="inferred from homology"/>
<keyword id="KW-0998">Cell outer membrane</keyword>
<keyword id="KW-0406">Ion transport</keyword>
<keyword id="KW-0472">Membrane</keyword>
<keyword id="KW-0626">Porin</keyword>
<keyword id="KW-1185">Reference proteome</keyword>
<keyword id="KW-0732">Signal</keyword>
<keyword id="KW-0762">Sugar transport</keyword>
<keyword id="KW-0812">Transmembrane</keyword>
<keyword id="KW-1134">Transmembrane beta strand</keyword>
<keyword id="KW-0813">Transport</keyword>
<name>LAMB_HAHCH</name>